<protein>
    <recommendedName>
        <fullName evidence="3">Potassium channel toxin kappa-KTx 2.3</fullName>
    </recommendedName>
    <alternativeName>
        <fullName evidence="2">Toxin OmTx3</fullName>
    </alternativeName>
</protein>
<evidence type="ECO:0000269" key="1">
    <source>
    </source>
</evidence>
<evidence type="ECO:0000303" key="2">
    <source>
    </source>
</evidence>
<evidence type="ECO:0000303" key="3">
    <source>
    </source>
</evidence>
<evidence type="ECO:0000305" key="4"/>
<evidence type="ECO:0000305" key="5">
    <source>
    </source>
</evidence>
<evidence type="ECO:0007829" key="6">
    <source>
        <dbReference type="PDB" id="1WQE"/>
    </source>
</evidence>
<proteinExistence type="evidence at protein level"/>
<organism>
    <name type="scientific">Opisthacanthus madagascariensis</name>
    <name type="common">Scorpion</name>
    <dbReference type="NCBI Taxonomy" id="167108"/>
    <lineage>
        <taxon>Eukaryota</taxon>
        <taxon>Metazoa</taxon>
        <taxon>Ecdysozoa</taxon>
        <taxon>Arthropoda</taxon>
        <taxon>Chelicerata</taxon>
        <taxon>Arachnida</taxon>
        <taxon>Scorpiones</taxon>
        <taxon>Iurida</taxon>
        <taxon>Scorpionoidea</taxon>
        <taxon>Hemiscorpiidae</taxon>
        <taxon>Opisthacanthus</taxon>
    </lineage>
</organism>
<reference key="1">
    <citation type="journal article" date="2005" name="Biochem. J.">
        <title>An unusual fold for potassium channel blockers: NMR structure of three toxins from the scorpion Opisthacanthus madagascariensis.</title>
        <authorList>
            <person name="Chagot B."/>
            <person name="Pimentel C."/>
            <person name="Dai L."/>
            <person name="Pil J."/>
            <person name="Tytgat J."/>
            <person name="Nakajima T."/>
            <person name="Corzo G."/>
            <person name="Darbon H."/>
            <person name="Ferrat G."/>
        </authorList>
    </citation>
    <scope>PROTEIN SEQUENCE</scope>
    <scope>FUNCTION</scope>
    <scope>SYNTHESIS</scope>
    <scope>SUBCELLULAR LOCATION</scope>
    <scope>STRUCTURE BY NMR</scope>
    <scope>DISULFIDE BONDS</scope>
    <source>
        <tissue>Venom</tissue>
    </source>
</reference>
<reference key="2">
    <citation type="journal article" date="2012" name="Biochem. Pharmacol.">
        <title>Purification, molecular cloning and functional characterization of HelaTx1 (Heterometrus laoticus): the first member of a new kappa-KTX subfamily.</title>
        <authorList>
            <person name="Vandendriessche T."/>
            <person name="Kopljar I."/>
            <person name="Jenkins D.P."/>
            <person name="Diego-Garcia E."/>
            <person name="Abdel-Mottaleb Y."/>
            <person name="Vermassen E."/>
            <person name="Clynen E."/>
            <person name="Schoofs L."/>
            <person name="Wulff H."/>
            <person name="Snyders D."/>
            <person name="Tytgat J."/>
        </authorList>
    </citation>
    <scope>NOMENCLATURE</scope>
</reference>
<name>KKX23_OPIMA</name>
<keyword id="KW-0002">3D-structure</keyword>
<keyword id="KW-0903">Direct protein sequencing</keyword>
<keyword id="KW-1015">Disulfide bond</keyword>
<keyword id="KW-0872">Ion channel impairing toxin</keyword>
<keyword id="KW-0528">Neurotoxin</keyword>
<keyword id="KW-0632">Potassium channel impairing toxin</keyword>
<keyword id="KW-0964">Secreted</keyword>
<keyword id="KW-0800">Toxin</keyword>
<keyword id="KW-1220">Voltage-gated potassium channel impairing toxin</keyword>
<sequence length="23" mass="2521">NDPCEEVCLQHTGNVKACEEACQ</sequence>
<accession>P0C1Z4</accession>
<feature type="peptide" id="PRO_0000254061" description="Potassium channel toxin kappa-KTx 2.3" evidence="1">
    <location>
        <begin position="1"/>
        <end position="23"/>
    </location>
</feature>
<feature type="disulfide bond" evidence="1">
    <location>
        <begin position="4"/>
        <end position="22"/>
    </location>
</feature>
<feature type="disulfide bond" evidence="1">
    <location>
        <begin position="8"/>
        <end position="18"/>
    </location>
</feature>
<feature type="sequence conflict" description="In Ref. 1; AA sequence." evidence="4" ref="1">
    <original>E</original>
    <variation>Y</variation>
    <location>
        <position position="5"/>
    </location>
</feature>
<feature type="helix" evidence="6">
    <location>
        <begin position="3"/>
        <end position="11"/>
    </location>
</feature>
<feature type="helix" evidence="6">
    <location>
        <begin position="15"/>
        <end position="22"/>
    </location>
</feature>
<dbReference type="PDB" id="1WQE">
    <property type="method" value="NMR"/>
    <property type="chains" value="A=1-23"/>
</dbReference>
<dbReference type="PDBsum" id="1WQE"/>
<dbReference type="SMR" id="P0C1Z4"/>
<dbReference type="EvolutionaryTrace" id="P0C1Z4"/>
<dbReference type="GO" id="GO:0005576">
    <property type="term" value="C:extracellular region"/>
    <property type="evidence" value="ECO:0007669"/>
    <property type="project" value="UniProtKB-SubCell"/>
</dbReference>
<dbReference type="GO" id="GO:0015459">
    <property type="term" value="F:potassium channel regulator activity"/>
    <property type="evidence" value="ECO:0007669"/>
    <property type="project" value="UniProtKB-KW"/>
</dbReference>
<dbReference type="GO" id="GO:0090729">
    <property type="term" value="F:toxin activity"/>
    <property type="evidence" value="ECO:0007669"/>
    <property type="project" value="UniProtKB-KW"/>
</dbReference>
<comment type="function">
    <text evidence="1">Decreases the amplitude of the potassium current of the rat channels Kv1.1/KCNA1 by 33% and Kv1.2/KCNA2 by 8% as well as human Kv1.3/KCNA3 by 70%.</text>
</comment>
<comment type="subcellular location">
    <subcellularLocation>
        <location evidence="1">Secreted</location>
    </subcellularLocation>
</comment>
<comment type="tissue specificity">
    <text evidence="5">Expressed by the venom gland.</text>
</comment>
<comment type="domain">
    <text evidence="1">Has the structural arrangement of two alpha-helices stabilized by disulfide bonds (CSalpha/alpha 2(S-S)).</text>
</comment>
<comment type="similarity">
    <text evidence="4">Belongs to the short scorpion toxin superfamily. Potassium channel inhibitor kappa-KTx family. Kappa-KTx 2 subfamily.</text>
</comment>
<comment type="caution">
    <text evidence="5">PubMed:15631621 shows two different sequences with Tyr-5 and with Glu-5 (see fig.2 and 4, respectively). The sequence of fig.2 is probably the erroneous one, since table 2 shows a Glu at position 5 and authors mention in the text the lack of aromatic residue on the first helix.</text>
</comment>